<reference key="1">
    <citation type="submission" date="2006-08" db="EMBL/GenBank/DDBJ databases">
        <title>Positive selection in transcription factor genes on the human lineage.</title>
        <authorList>
            <person name="Nickel G.C."/>
            <person name="Tefft D.L."/>
            <person name="Trevarthen K."/>
            <person name="Funt J."/>
            <person name="Adams M.D."/>
        </authorList>
    </citation>
    <scope>NUCLEOTIDE SEQUENCE [GENOMIC DNA]</scope>
</reference>
<proteinExistence type="inferred from homology"/>
<keyword id="KW-0007">Acetylation</keyword>
<keyword id="KW-0238">DNA-binding</keyword>
<keyword id="KW-1017">Isopeptide bond</keyword>
<keyword id="KW-0539">Nucleus</keyword>
<keyword id="KW-0597">Phosphoprotein</keyword>
<keyword id="KW-1185">Reference proteome</keyword>
<keyword id="KW-0678">Repressor</keyword>
<keyword id="KW-0804">Transcription</keyword>
<keyword id="KW-0805">Transcription regulation</keyword>
<keyword id="KW-0832">Ubl conjugation</keyword>
<evidence type="ECO:0000250" key="1"/>
<evidence type="ECO:0000250" key="2">
    <source>
        <dbReference type="UniProtKB" id="P41162"/>
    </source>
</evidence>
<evidence type="ECO:0000250" key="3">
    <source>
        <dbReference type="UniProtKB" id="Q8R4Z4"/>
    </source>
</evidence>
<evidence type="ECO:0000255" key="4">
    <source>
        <dbReference type="PROSITE-ProRule" id="PRU00237"/>
    </source>
</evidence>
<evidence type="ECO:0000256" key="5">
    <source>
        <dbReference type="SAM" id="MobiDB-lite"/>
    </source>
</evidence>
<evidence type="ECO:0000305" key="6"/>
<sequence length="512" mass="57131">MKAGCSIVEKPEGGGGYQFPDWAYKTESSPGSRQIQLWHFILELLQKEEFRHVIAWQQGEYGEFVIKDPDEVARLWGRRKCKPQMNYDKLSRALRYYYNKRILHKTKGKRFTYKFNFNKLVMPNYPFINIRSSGVVPQSAPPVPTASSRFHFPPLDTHSPTNDVQPGRFSASSLTASGQESSNGTDRKTELSELEDGSAADWRRGVDPMSSRNAIGGGGIGHQKRKPDIMLPLFARPGMYPDPHSPFAVSPIPGRGGVLNVPISPALSLTPTIFSYSPSPGLSPFTSSSCFSFNPEEMKHYLHSQACSVFNYHLSPRTFPRYPGLMVPPLQCQMHPEESTQFSIKLQPPPVGRKNRERVESSEESAPVTTPTMASIPPRIKVEPASEKDPESLRQSAREKEEHTQEEGTVPSRTIEEEKGTIFARPAAPPIWPSVPISTPSEEPLEVTEDIEDRPGKEPSAPEKKEDALMPPKLRLKRRWNDDPEARELSKSGKFLWNGSGPQGLATAAADA</sequence>
<feature type="chain" id="PRO_0000285523" description="ETS translocation variant 3">
    <location>
        <begin position="1"/>
        <end position="512"/>
    </location>
</feature>
<feature type="DNA-binding region" description="ETS" evidence="4">
    <location>
        <begin position="35"/>
        <end position="116"/>
    </location>
</feature>
<feature type="region of interest" description="Disordered" evidence="5">
    <location>
        <begin position="136"/>
        <end position="222"/>
    </location>
</feature>
<feature type="region of interest" description="Disordered" evidence="5">
    <location>
        <begin position="336"/>
        <end position="512"/>
    </location>
</feature>
<feature type="compositionally biased region" description="Polar residues" evidence="5">
    <location>
        <begin position="158"/>
        <end position="184"/>
    </location>
</feature>
<feature type="compositionally biased region" description="Basic and acidic residues" evidence="5">
    <location>
        <begin position="380"/>
        <end position="406"/>
    </location>
</feature>
<feature type="compositionally biased region" description="Acidic residues" evidence="5">
    <location>
        <begin position="443"/>
        <end position="452"/>
    </location>
</feature>
<feature type="compositionally biased region" description="Basic and acidic residues" evidence="5">
    <location>
        <begin position="453"/>
        <end position="468"/>
    </location>
</feature>
<feature type="compositionally biased region" description="Basic and acidic residues" evidence="5">
    <location>
        <begin position="479"/>
        <end position="491"/>
    </location>
</feature>
<feature type="modified residue" description="Phosphoserine" evidence="2">
    <location>
        <position position="139"/>
    </location>
</feature>
<feature type="modified residue" description="Phosphoserine" evidence="2">
    <location>
        <position position="159"/>
    </location>
</feature>
<feature type="modified residue" description="Phosphoserine" evidence="3">
    <location>
        <position position="315"/>
    </location>
</feature>
<feature type="modified residue" description="N6-acetyllysine; alternate" evidence="2">
    <location>
        <position position="388"/>
    </location>
</feature>
<feature type="cross-link" description="Glycyl lysine isopeptide (Lys-Gly) (interchain with G-Cter in SUMO2)" evidence="2">
    <location>
        <position position="381"/>
    </location>
</feature>
<feature type="cross-link" description="Glycyl lysine isopeptide (Lys-Gly) (interchain with G-Cter in SUMO2); alternate" evidence="2">
    <location>
        <position position="388"/>
    </location>
</feature>
<accession>A2T762</accession>
<comment type="function">
    <text evidence="1">Transcriptional repressor that contribute to growth arrest during terminal macrophage differentiation by repressing target genes involved in Ras-dependent proliferation. Represses MMP1 promoter activity (By similarity).</text>
</comment>
<comment type="subcellular location">
    <subcellularLocation>
        <location evidence="4">Nucleus</location>
    </subcellularLocation>
</comment>
<comment type="similarity">
    <text evidence="6">Belongs to the ETS family.</text>
</comment>
<organism>
    <name type="scientific">Pan troglodytes</name>
    <name type="common">Chimpanzee</name>
    <dbReference type="NCBI Taxonomy" id="9598"/>
    <lineage>
        <taxon>Eukaryota</taxon>
        <taxon>Metazoa</taxon>
        <taxon>Chordata</taxon>
        <taxon>Craniata</taxon>
        <taxon>Vertebrata</taxon>
        <taxon>Euteleostomi</taxon>
        <taxon>Mammalia</taxon>
        <taxon>Eutheria</taxon>
        <taxon>Euarchontoglires</taxon>
        <taxon>Primates</taxon>
        <taxon>Haplorrhini</taxon>
        <taxon>Catarrhini</taxon>
        <taxon>Hominidae</taxon>
        <taxon>Pan</taxon>
    </lineage>
</organism>
<dbReference type="EMBL" id="DQ977379">
    <property type="protein sequence ID" value="ABM92017.1"/>
    <property type="molecule type" value="Genomic_DNA"/>
</dbReference>
<dbReference type="RefSeq" id="NP_001074948.1">
    <property type="nucleotide sequence ID" value="NM_001081479.1"/>
</dbReference>
<dbReference type="RefSeq" id="XP_009432030.1">
    <property type="nucleotide sequence ID" value="XM_009433755.2"/>
</dbReference>
<dbReference type="RefSeq" id="XP_009432034.1">
    <property type="nucleotide sequence ID" value="XM_009433759.2"/>
</dbReference>
<dbReference type="SMR" id="A2T762"/>
<dbReference type="FunCoup" id="A2T762">
    <property type="interactions" value="2785"/>
</dbReference>
<dbReference type="STRING" id="9598.ENSPTRP00000071945"/>
<dbReference type="PaxDb" id="9598-ENSPTRP00000002513"/>
<dbReference type="Ensembl" id="ENSPTRT00000095701.1">
    <property type="protein sequence ID" value="ENSPTRP00000071945.1"/>
    <property type="gene ID" value="ENSPTRG00000049741.1"/>
</dbReference>
<dbReference type="GeneID" id="457412"/>
<dbReference type="KEGG" id="ptr:457412"/>
<dbReference type="CTD" id="2117"/>
<dbReference type="VGNC" id="VGNC:11313">
    <property type="gene designation" value="ETV3"/>
</dbReference>
<dbReference type="eggNOG" id="KOG3806">
    <property type="taxonomic scope" value="Eukaryota"/>
</dbReference>
<dbReference type="GeneTree" id="ENSGT00940000160963"/>
<dbReference type="HOGENOM" id="CLU_023454_1_0_1"/>
<dbReference type="InParanoid" id="A2T762"/>
<dbReference type="OMA" id="DTHSPTN"/>
<dbReference type="OrthoDB" id="1842at9604"/>
<dbReference type="TreeFam" id="TF351065"/>
<dbReference type="Proteomes" id="UP000002277">
    <property type="component" value="Chromosome 1"/>
</dbReference>
<dbReference type="Bgee" id="ENSPTRG00000049741">
    <property type="expression patterns" value="Expressed in temporal lobe and 21 other cell types or tissues"/>
</dbReference>
<dbReference type="GO" id="GO:0000785">
    <property type="term" value="C:chromatin"/>
    <property type="evidence" value="ECO:0007669"/>
    <property type="project" value="Ensembl"/>
</dbReference>
<dbReference type="GO" id="GO:0005654">
    <property type="term" value="C:nucleoplasm"/>
    <property type="evidence" value="ECO:0007669"/>
    <property type="project" value="Ensembl"/>
</dbReference>
<dbReference type="GO" id="GO:0005634">
    <property type="term" value="C:nucleus"/>
    <property type="evidence" value="ECO:0000318"/>
    <property type="project" value="GO_Central"/>
</dbReference>
<dbReference type="GO" id="GO:0090571">
    <property type="term" value="C:RNA polymerase II transcription repressor complex"/>
    <property type="evidence" value="ECO:0007669"/>
    <property type="project" value="Ensembl"/>
</dbReference>
<dbReference type="GO" id="GO:0017151">
    <property type="term" value="F:DEAD/H-box RNA helicase binding"/>
    <property type="evidence" value="ECO:0007669"/>
    <property type="project" value="Ensembl"/>
</dbReference>
<dbReference type="GO" id="GO:0000981">
    <property type="term" value="F:DNA-binding transcription factor activity, RNA polymerase II-specific"/>
    <property type="evidence" value="ECO:0000318"/>
    <property type="project" value="GO_Central"/>
</dbReference>
<dbReference type="GO" id="GO:0001227">
    <property type="term" value="F:DNA-binding transcription repressor activity, RNA polymerase II-specific"/>
    <property type="evidence" value="ECO:0007669"/>
    <property type="project" value="Ensembl"/>
</dbReference>
<dbReference type="GO" id="GO:0000977">
    <property type="term" value="F:RNA polymerase II transcription regulatory region sequence-specific DNA binding"/>
    <property type="evidence" value="ECO:0007669"/>
    <property type="project" value="Ensembl"/>
</dbReference>
<dbReference type="GO" id="GO:0030154">
    <property type="term" value="P:cell differentiation"/>
    <property type="evidence" value="ECO:0000318"/>
    <property type="project" value="GO_Central"/>
</dbReference>
<dbReference type="GO" id="GO:0097011">
    <property type="term" value="P:cellular response to granulocyte macrophage colony-stimulating factor stimulus"/>
    <property type="evidence" value="ECO:0007669"/>
    <property type="project" value="Ensembl"/>
</dbReference>
<dbReference type="GO" id="GO:0008285">
    <property type="term" value="P:negative regulation of cell population proliferation"/>
    <property type="evidence" value="ECO:0007669"/>
    <property type="project" value="Ensembl"/>
</dbReference>
<dbReference type="GO" id="GO:0006357">
    <property type="term" value="P:regulation of transcription by RNA polymerase II"/>
    <property type="evidence" value="ECO:0000318"/>
    <property type="project" value="GO_Central"/>
</dbReference>
<dbReference type="FunFam" id="1.10.10.10:FF:000059">
    <property type="entry name" value="ETS translocation variant 3"/>
    <property type="match status" value="1"/>
</dbReference>
<dbReference type="Gene3D" id="1.10.10.10">
    <property type="entry name" value="Winged helix-like DNA-binding domain superfamily/Winged helix DNA-binding domain"/>
    <property type="match status" value="1"/>
</dbReference>
<dbReference type="InterPro" id="IPR000418">
    <property type="entry name" value="Ets_dom"/>
</dbReference>
<dbReference type="InterPro" id="IPR046328">
    <property type="entry name" value="ETS_fam"/>
</dbReference>
<dbReference type="InterPro" id="IPR036388">
    <property type="entry name" value="WH-like_DNA-bd_sf"/>
</dbReference>
<dbReference type="InterPro" id="IPR036390">
    <property type="entry name" value="WH_DNA-bd_sf"/>
</dbReference>
<dbReference type="PANTHER" id="PTHR11849">
    <property type="entry name" value="ETS"/>
    <property type="match status" value="1"/>
</dbReference>
<dbReference type="PANTHER" id="PTHR11849:SF30">
    <property type="entry name" value="ETS TRANSLOCATION VARIANT 3"/>
    <property type="match status" value="1"/>
</dbReference>
<dbReference type="Pfam" id="PF00178">
    <property type="entry name" value="Ets"/>
    <property type="match status" value="1"/>
</dbReference>
<dbReference type="PRINTS" id="PR00454">
    <property type="entry name" value="ETSDOMAIN"/>
</dbReference>
<dbReference type="SMART" id="SM00413">
    <property type="entry name" value="ETS"/>
    <property type="match status" value="1"/>
</dbReference>
<dbReference type="SUPFAM" id="SSF46785">
    <property type="entry name" value="Winged helix' DNA-binding domain"/>
    <property type="match status" value="1"/>
</dbReference>
<dbReference type="PROSITE" id="PS00345">
    <property type="entry name" value="ETS_DOMAIN_1"/>
    <property type="match status" value="1"/>
</dbReference>
<dbReference type="PROSITE" id="PS00346">
    <property type="entry name" value="ETS_DOMAIN_2"/>
    <property type="match status" value="1"/>
</dbReference>
<dbReference type="PROSITE" id="PS50061">
    <property type="entry name" value="ETS_DOMAIN_3"/>
    <property type="match status" value="1"/>
</dbReference>
<protein>
    <recommendedName>
        <fullName>ETS translocation variant 3</fullName>
    </recommendedName>
</protein>
<name>ETV3_PANTR</name>
<gene>
    <name type="primary">ETV3</name>
</gene>